<organism>
    <name type="scientific">Aeromonas hydrophila subsp. hydrophila (strain ATCC 7966 / DSM 30187 / BCRC 13018 / CCUG 14551 / JCM 1027 / KCTC 2358 / NCIMB 9240 / NCTC 8049)</name>
    <dbReference type="NCBI Taxonomy" id="380703"/>
    <lineage>
        <taxon>Bacteria</taxon>
        <taxon>Pseudomonadati</taxon>
        <taxon>Pseudomonadota</taxon>
        <taxon>Gammaproteobacteria</taxon>
        <taxon>Aeromonadales</taxon>
        <taxon>Aeromonadaceae</taxon>
        <taxon>Aeromonas</taxon>
    </lineage>
</organism>
<feature type="chain" id="PRO_1000069008" description="Probable phosphatase AHA_1344">
    <location>
        <begin position="1"/>
        <end position="246"/>
    </location>
</feature>
<feature type="binding site" evidence="1">
    <location>
        <position position="8"/>
    </location>
    <ligand>
        <name>Zn(2+)</name>
        <dbReference type="ChEBI" id="CHEBI:29105"/>
        <label>1</label>
    </ligand>
</feature>
<feature type="binding site" evidence="1">
    <location>
        <position position="10"/>
    </location>
    <ligand>
        <name>Zn(2+)</name>
        <dbReference type="ChEBI" id="CHEBI:29105"/>
        <label>1</label>
    </ligand>
</feature>
<feature type="binding site" evidence="1">
    <location>
        <position position="16"/>
    </location>
    <ligand>
        <name>Zn(2+)</name>
        <dbReference type="ChEBI" id="CHEBI:29105"/>
        <label>2</label>
    </ligand>
</feature>
<feature type="binding site" evidence="1">
    <location>
        <position position="41"/>
    </location>
    <ligand>
        <name>Zn(2+)</name>
        <dbReference type="ChEBI" id="CHEBI:29105"/>
        <label>2</label>
    </ligand>
</feature>
<feature type="binding site" evidence="1">
    <location>
        <position position="74"/>
    </location>
    <ligand>
        <name>Zn(2+)</name>
        <dbReference type="ChEBI" id="CHEBI:29105"/>
        <label>1</label>
    </ligand>
</feature>
<feature type="binding site" evidence="1">
    <location>
        <position position="74"/>
    </location>
    <ligand>
        <name>Zn(2+)</name>
        <dbReference type="ChEBI" id="CHEBI:29105"/>
        <label>3</label>
    </ligand>
</feature>
<feature type="binding site" evidence="1">
    <location>
        <position position="102"/>
    </location>
    <ligand>
        <name>Zn(2+)</name>
        <dbReference type="ChEBI" id="CHEBI:29105"/>
        <label>3</label>
    </ligand>
</feature>
<feature type="binding site" evidence="1">
    <location>
        <position position="132"/>
    </location>
    <ligand>
        <name>Zn(2+)</name>
        <dbReference type="ChEBI" id="CHEBI:29105"/>
        <label>3</label>
    </ligand>
</feature>
<feature type="binding site" evidence="1">
    <location>
        <position position="193"/>
    </location>
    <ligand>
        <name>Zn(2+)</name>
        <dbReference type="ChEBI" id="CHEBI:29105"/>
        <label>1</label>
    </ligand>
</feature>
<feature type="binding site" evidence="1">
    <location>
        <position position="195"/>
    </location>
    <ligand>
        <name>Zn(2+)</name>
        <dbReference type="ChEBI" id="CHEBI:29105"/>
        <label>2</label>
    </ligand>
</feature>
<protein>
    <recommendedName>
        <fullName evidence="1">Probable phosphatase AHA_1344</fullName>
        <ecNumber evidence="1">3.1.3.-</ecNumber>
    </recommendedName>
</protein>
<comment type="cofactor">
    <cofactor evidence="1">
        <name>Zn(2+)</name>
        <dbReference type="ChEBI" id="CHEBI:29105"/>
    </cofactor>
    <text evidence="1">Binds 3 Zn(2+) ions per subunit.</text>
</comment>
<comment type="similarity">
    <text evidence="1">Belongs to the PHP family.</text>
</comment>
<gene>
    <name type="ordered locus">AHA_1344</name>
</gene>
<keyword id="KW-0378">Hydrolase</keyword>
<keyword id="KW-0479">Metal-binding</keyword>
<keyword id="KW-1185">Reference proteome</keyword>
<keyword id="KW-0862">Zinc</keyword>
<dbReference type="EC" id="3.1.3.-" evidence="1"/>
<dbReference type="EMBL" id="CP000462">
    <property type="protein sequence ID" value="ABK36337.1"/>
    <property type="molecule type" value="Genomic_DNA"/>
</dbReference>
<dbReference type="RefSeq" id="WP_011705251.1">
    <property type="nucleotide sequence ID" value="NC_008570.1"/>
</dbReference>
<dbReference type="RefSeq" id="YP_855883.1">
    <property type="nucleotide sequence ID" value="NC_008570.1"/>
</dbReference>
<dbReference type="SMR" id="A0KHY2"/>
<dbReference type="STRING" id="380703.AHA_1344"/>
<dbReference type="EnsemblBacteria" id="ABK36337">
    <property type="protein sequence ID" value="ABK36337"/>
    <property type="gene ID" value="AHA_1344"/>
</dbReference>
<dbReference type="GeneID" id="4487902"/>
<dbReference type="KEGG" id="aha:AHA_1344"/>
<dbReference type="PATRIC" id="fig|380703.7.peg.1352"/>
<dbReference type="eggNOG" id="COG1387">
    <property type="taxonomic scope" value="Bacteria"/>
</dbReference>
<dbReference type="HOGENOM" id="CLU_061999_0_1_6"/>
<dbReference type="OrthoDB" id="9808747at2"/>
<dbReference type="Proteomes" id="UP000000756">
    <property type="component" value="Chromosome"/>
</dbReference>
<dbReference type="GO" id="GO:0005829">
    <property type="term" value="C:cytosol"/>
    <property type="evidence" value="ECO:0007669"/>
    <property type="project" value="TreeGrafter"/>
</dbReference>
<dbReference type="GO" id="GO:0016791">
    <property type="term" value="F:phosphatase activity"/>
    <property type="evidence" value="ECO:0007669"/>
    <property type="project" value="UniProtKB-UniRule"/>
</dbReference>
<dbReference type="GO" id="GO:0008270">
    <property type="term" value="F:zinc ion binding"/>
    <property type="evidence" value="ECO:0007669"/>
    <property type="project" value="UniProtKB-UniRule"/>
</dbReference>
<dbReference type="GO" id="GO:0071978">
    <property type="term" value="P:bacterial-type flagellum-dependent swarming motility"/>
    <property type="evidence" value="ECO:0007669"/>
    <property type="project" value="TreeGrafter"/>
</dbReference>
<dbReference type="CDD" id="cd07437">
    <property type="entry name" value="PHP_HisPPase_Ycdx_like"/>
    <property type="match status" value="1"/>
</dbReference>
<dbReference type="FunFam" id="3.20.20.140:FF:000008">
    <property type="entry name" value="Probable phosphatase YcdX"/>
    <property type="match status" value="1"/>
</dbReference>
<dbReference type="Gene3D" id="3.20.20.140">
    <property type="entry name" value="Metal-dependent hydrolases"/>
    <property type="match status" value="1"/>
</dbReference>
<dbReference type="HAMAP" id="MF_01561">
    <property type="entry name" value="YcdX_phosphat"/>
    <property type="match status" value="1"/>
</dbReference>
<dbReference type="InterPro" id="IPR023710">
    <property type="entry name" value="Phosphatase_YcdX_put"/>
</dbReference>
<dbReference type="InterPro" id="IPR004013">
    <property type="entry name" value="PHP_dom"/>
</dbReference>
<dbReference type="InterPro" id="IPR050243">
    <property type="entry name" value="PHP_phosphatase"/>
</dbReference>
<dbReference type="InterPro" id="IPR003141">
    <property type="entry name" value="Pol/His_phosphatase_N"/>
</dbReference>
<dbReference type="InterPro" id="IPR016195">
    <property type="entry name" value="Pol/histidinol_Pase-like"/>
</dbReference>
<dbReference type="NCBIfam" id="NF006702">
    <property type="entry name" value="PRK09248.1"/>
    <property type="match status" value="1"/>
</dbReference>
<dbReference type="PANTHER" id="PTHR36928">
    <property type="entry name" value="PHOSPHATASE YCDX-RELATED"/>
    <property type="match status" value="1"/>
</dbReference>
<dbReference type="PANTHER" id="PTHR36928:SF1">
    <property type="entry name" value="PHOSPHATASE YCDX-RELATED"/>
    <property type="match status" value="1"/>
</dbReference>
<dbReference type="Pfam" id="PF02811">
    <property type="entry name" value="PHP"/>
    <property type="match status" value="1"/>
</dbReference>
<dbReference type="SMART" id="SM00481">
    <property type="entry name" value="POLIIIAc"/>
    <property type="match status" value="1"/>
</dbReference>
<dbReference type="SUPFAM" id="SSF89550">
    <property type="entry name" value="PHP domain-like"/>
    <property type="match status" value="1"/>
</dbReference>
<evidence type="ECO:0000255" key="1">
    <source>
        <dbReference type="HAMAP-Rule" id="MF_01561"/>
    </source>
</evidence>
<name>Y1344_AERHH</name>
<reference key="1">
    <citation type="journal article" date="2006" name="J. Bacteriol.">
        <title>Genome sequence of Aeromonas hydrophila ATCC 7966T: jack of all trades.</title>
        <authorList>
            <person name="Seshadri R."/>
            <person name="Joseph S.W."/>
            <person name="Chopra A.K."/>
            <person name="Sha J."/>
            <person name="Shaw J."/>
            <person name="Graf J."/>
            <person name="Haft D.H."/>
            <person name="Wu M."/>
            <person name="Ren Q."/>
            <person name="Rosovitz M.J."/>
            <person name="Madupu R."/>
            <person name="Tallon L."/>
            <person name="Kim M."/>
            <person name="Jin S."/>
            <person name="Vuong H."/>
            <person name="Stine O.C."/>
            <person name="Ali A."/>
            <person name="Horneman A.J."/>
            <person name="Heidelberg J.F."/>
        </authorList>
    </citation>
    <scope>NUCLEOTIDE SEQUENCE [LARGE SCALE GENOMIC DNA]</scope>
    <source>
        <strain>ATCC 7966 / DSM 30187 / BCRC 13018 / CCUG 14551 / JCM 1027 / KCTC 2358 / NCIMB 9240 / NCTC 8049</strain>
    </source>
</reference>
<sequence length="246" mass="27139">MKYTVDTHTHTVASTHAYSTIHDYLPIAKAKGIKLFATTDHGPDMADAPHFWHFVNLHVLPRVVDGVGILRGIEANIKNIDGEIDFPERYESRLDMIMAGFHEPVFPPCDQATHTQAMINAIKSGRVDMISHPGNPAFPIDIQAVVKAAAEYRVALELNNSSFSHSRPGSEGNCRAIVEAARDMGAYLTFGSDSHVAFSLGDFEHCHRLVTEAGFPAERILARSPRALLDFLESRGRAHIPEFADL</sequence>
<accession>A0KHY2</accession>
<proteinExistence type="inferred from homology"/>